<reference key="1">
    <citation type="journal article" date="2008" name="J. Bacteriol.">
        <title>The complete genome sequence of Actinobacillus pleuropneumoniae L20 (serotype 5b).</title>
        <authorList>
            <person name="Foote S.J."/>
            <person name="Bosse J.T."/>
            <person name="Bouevitch A.B."/>
            <person name="Langford P.R."/>
            <person name="Young N.M."/>
            <person name="Nash J.H.E."/>
        </authorList>
    </citation>
    <scope>NUCLEOTIDE SEQUENCE [LARGE SCALE GENOMIC DNA]</scope>
    <source>
        <strain>L20</strain>
    </source>
</reference>
<proteinExistence type="inferred from homology"/>
<comment type="function">
    <text evidence="1">Catalyzes the reduction of hydroxylamine to form NH(3) and H(2)O.</text>
</comment>
<comment type="catalytic activity">
    <reaction evidence="1">
        <text>A + NH4(+) + H2O = hydroxylamine + AH2 + H(+)</text>
        <dbReference type="Rhea" id="RHEA:22052"/>
        <dbReference type="ChEBI" id="CHEBI:13193"/>
        <dbReference type="ChEBI" id="CHEBI:15377"/>
        <dbReference type="ChEBI" id="CHEBI:15378"/>
        <dbReference type="ChEBI" id="CHEBI:15429"/>
        <dbReference type="ChEBI" id="CHEBI:17499"/>
        <dbReference type="ChEBI" id="CHEBI:28938"/>
        <dbReference type="EC" id="1.7.99.1"/>
    </reaction>
</comment>
<comment type="cofactor">
    <cofactor evidence="1">
        <name>[2Fe-2S] cluster</name>
        <dbReference type="ChEBI" id="CHEBI:190135"/>
    </cofactor>
    <text evidence="1">Binds 1 [2Fe-2S] cluster.</text>
</comment>
<comment type="cofactor">
    <cofactor evidence="1">
        <name>hybrid [4Fe-2O-2S] cluster</name>
        <dbReference type="ChEBI" id="CHEBI:60519"/>
    </cofactor>
    <text evidence="1">Binds 1 hybrid [4Fe-2O-2S] cluster.</text>
</comment>
<comment type="subcellular location">
    <subcellularLocation>
        <location evidence="1">Cytoplasm</location>
    </subcellularLocation>
</comment>
<comment type="similarity">
    <text evidence="1">Belongs to the HCP family.</text>
</comment>
<evidence type="ECO:0000255" key="1">
    <source>
        <dbReference type="HAMAP-Rule" id="MF_00069"/>
    </source>
</evidence>
<accession>A3N2J4</accession>
<feature type="chain" id="PRO_1000009139" description="Hydroxylamine reductase">
    <location>
        <begin position="1"/>
        <end position="551"/>
    </location>
</feature>
<feature type="binding site" evidence="1">
    <location>
        <position position="3"/>
    </location>
    <ligand>
        <name>[2Fe-2S] cluster</name>
        <dbReference type="ChEBI" id="CHEBI:190135"/>
    </ligand>
</feature>
<feature type="binding site" evidence="1">
    <location>
        <position position="6"/>
    </location>
    <ligand>
        <name>[2Fe-2S] cluster</name>
        <dbReference type="ChEBI" id="CHEBI:190135"/>
    </ligand>
</feature>
<feature type="binding site" evidence="1">
    <location>
        <position position="18"/>
    </location>
    <ligand>
        <name>[2Fe-2S] cluster</name>
        <dbReference type="ChEBI" id="CHEBI:190135"/>
    </ligand>
</feature>
<feature type="binding site" evidence="1">
    <location>
        <position position="25"/>
    </location>
    <ligand>
        <name>[2Fe-2S] cluster</name>
        <dbReference type="ChEBI" id="CHEBI:190135"/>
    </ligand>
</feature>
<feature type="binding site" evidence="1">
    <location>
        <position position="249"/>
    </location>
    <ligand>
        <name>hybrid [4Fe-2O-2S] cluster</name>
        <dbReference type="ChEBI" id="CHEBI:60519"/>
    </ligand>
</feature>
<feature type="binding site" evidence="1">
    <location>
        <position position="273"/>
    </location>
    <ligand>
        <name>hybrid [4Fe-2O-2S] cluster</name>
        <dbReference type="ChEBI" id="CHEBI:60519"/>
    </ligand>
</feature>
<feature type="binding site" evidence="1">
    <location>
        <position position="317"/>
    </location>
    <ligand>
        <name>hybrid [4Fe-2O-2S] cluster</name>
        <dbReference type="ChEBI" id="CHEBI:60519"/>
    </ligand>
</feature>
<feature type="binding site" description="via persulfide group" evidence="1">
    <location>
        <position position="405"/>
    </location>
    <ligand>
        <name>hybrid [4Fe-2O-2S] cluster</name>
        <dbReference type="ChEBI" id="CHEBI:60519"/>
    </ligand>
</feature>
<feature type="binding site" evidence="1">
    <location>
        <position position="433"/>
    </location>
    <ligand>
        <name>hybrid [4Fe-2O-2S] cluster</name>
        <dbReference type="ChEBI" id="CHEBI:60519"/>
    </ligand>
</feature>
<feature type="binding site" evidence="1">
    <location>
        <position position="459"/>
    </location>
    <ligand>
        <name>hybrid [4Fe-2O-2S] cluster</name>
        <dbReference type="ChEBI" id="CHEBI:60519"/>
    </ligand>
</feature>
<feature type="binding site" evidence="1">
    <location>
        <position position="493"/>
    </location>
    <ligand>
        <name>hybrid [4Fe-2O-2S] cluster</name>
        <dbReference type="ChEBI" id="CHEBI:60519"/>
    </ligand>
</feature>
<feature type="binding site" evidence="1">
    <location>
        <position position="495"/>
    </location>
    <ligand>
        <name>hybrid [4Fe-2O-2S] cluster</name>
        <dbReference type="ChEBI" id="CHEBI:60519"/>
    </ligand>
</feature>
<feature type="modified residue" description="Cysteine persulfide" evidence="1">
    <location>
        <position position="405"/>
    </location>
</feature>
<name>HCP_ACTP2</name>
<keyword id="KW-0001">2Fe-2S</keyword>
<keyword id="KW-0963">Cytoplasm</keyword>
<keyword id="KW-0408">Iron</keyword>
<keyword id="KW-0411">Iron-sulfur</keyword>
<keyword id="KW-0479">Metal-binding</keyword>
<keyword id="KW-0560">Oxidoreductase</keyword>
<keyword id="KW-1185">Reference proteome</keyword>
<protein>
    <recommendedName>
        <fullName evidence="1">Hydroxylamine reductase</fullName>
        <ecNumber evidence="1">1.7.99.1</ecNumber>
    </recommendedName>
    <alternativeName>
        <fullName evidence="1">Hybrid-cluster protein</fullName>
        <shortName evidence="1">HCP</shortName>
    </alternativeName>
    <alternativeName>
        <fullName evidence="1">Prismane protein</fullName>
    </alternativeName>
</protein>
<dbReference type="EC" id="1.7.99.1" evidence="1"/>
<dbReference type="EMBL" id="CP000569">
    <property type="protein sequence ID" value="ABN74630.1"/>
    <property type="molecule type" value="Genomic_DNA"/>
</dbReference>
<dbReference type="RefSeq" id="WP_009874559.1">
    <property type="nucleotide sequence ID" value="NC_009053.1"/>
</dbReference>
<dbReference type="SMR" id="A3N2J4"/>
<dbReference type="STRING" id="416269.APL_1546"/>
<dbReference type="EnsemblBacteria" id="ABN74630">
    <property type="protein sequence ID" value="ABN74630"/>
    <property type="gene ID" value="APL_1546"/>
</dbReference>
<dbReference type="GeneID" id="48599829"/>
<dbReference type="KEGG" id="apl:APL_1546"/>
<dbReference type="eggNOG" id="COG1151">
    <property type="taxonomic scope" value="Bacteria"/>
</dbReference>
<dbReference type="HOGENOM" id="CLU_038344_2_0_6"/>
<dbReference type="Proteomes" id="UP000001432">
    <property type="component" value="Chromosome"/>
</dbReference>
<dbReference type="GO" id="GO:0005737">
    <property type="term" value="C:cytoplasm"/>
    <property type="evidence" value="ECO:0007669"/>
    <property type="project" value="UniProtKB-SubCell"/>
</dbReference>
<dbReference type="GO" id="GO:0051537">
    <property type="term" value="F:2 iron, 2 sulfur cluster binding"/>
    <property type="evidence" value="ECO:0007669"/>
    <property type="project" value="UniProtKB-KW"/>
</dbReference>
<dbReference type="GO" id="GO:0050418">
    <property type="term" value="F:hydroxylamine reductase activity"/>
    <property type="evidence" value="ECO:0007669"/>
    <property type="project" value="UniProtKB-UniRule"/>
</dbReference>
<dbReference type="GO" id="GO:0046872">
    <property type="term" value="F:metal ion binding"/>
    <property type="evidence" value="ECO:0007669"/>
    <property type="project" value="UniProtKB-KW"/>
</dbReference>
<dbReference type="GO" id="GO:0004601">
    <property type="term" value="F:peroxidase activity"/>
    <property type="evidence" value="ECO:0007669"/>
    <property type="project" value="TreeGrafter"/>
</dbReference>
<dbReference type="GO" id="GO:0042542">
    <property type="term" value="P:response to hydrogen peroxide"/>
    <property type="evidence" value="ECO:0007669"/>
    <property type="project" value="TreeGrafter"/>
</dbReference>
<dbReference type="FunFam" id="1.20.1270.20:FF:000001">
    <property type="entry name" value="Hydroxylamine reductase"/>
    <property type="match status" value="1"/>
</dbReference>
<dbReference type="FunFam" id="1.20.1270.20:FF:000002">
    <property type="entry name" value="Hydroxylamine reductase"/>
    <property type="match status" value="1"/>
</dbReference>
<dbReference type="FunFam" id="3.40.50.2030:FF:000001">
    <property type="entry name" value="Hydroxylamine reductase"/>
    <property type="match status" value="1"/>
</dbReference>
<dbReference type="FunFam" id="3.40.50.2030:FF:000002">
    <property type="entry name" value="Hydroxylamine reductase"/>
    <property type="match status" value="1"/>
</dbReference>
<dbReference type="Gene3D" id="1.20.1270.20">
    <property type="match status" value="2"/>
</dbReference>
<dbReference type="Gene3D" id="3.40.50.2030">
    <property type="match status" value="2"/>
</dbReference>
<dbReference type="HAMAP" id="MF_00069">
    <property type="entry name" value="Hydroxylam_reduct"/>
    <property type="match status" value="1"/>
</dbReference>
<dbReference type="InterPro" id="IPR004137">
    <property type="entry name" value="HCP/CODH"/>
</dbReference>
<dbReference type="InterPro" id="IPR010048">
    <property type="entry name" value="Hydroxylam_reduct"/>
</dbReference>
<dbReference type="InterPro" id="IPR016099">
    <property type="entry name" value="Prismane-like_a/b-sand"/>
</dbReference>
<dbReference type="InterPro" id="IPR011254">
    <property type="entry name" value="Prismane-like_sf"/>
</dbReference>
<dbReference type="InterPro" id="IPR016100">
    <property type="entry name" value="Prismane_a-bundle"/>
</dbReference>
<dbReference type="NCBIfam" id="TIGR01703">
    <property type="entry name" value="hybrid_clust"/>
    <property type="match status" value="1"/>
</dbReference>
<dbReference type="NCBIfam" id="NF003658">
    <property type="entry name" value="PRK05290.1"/>
    <property type="match status" value="1"/>
</dbReference>
<dbReference type="PANTHER" id="PTHR30109">
    <property type="entry name" value="HYDROXYLAMINE REDUCTASE"/>
    <property type="match status" value="1"/>
</dbReference>
<dbReference type="PANTHER" id="PTHR30109:SF0">
    <property type="entry name" value="HYDROXYLAMINE REDUCTASE"/>
    <property type="match status" value="1"/>
</dbReference>
<dbReference type="Pfam" id="PF03063">
    <property type="entry name" value="Prismane"/>
    <property type="match status" value="1"/>
</dbReference>
<dbReference type="PIRSF" id="PIRSF000076">
    <property type="entry name" value="HCP"/>
    <property type="match status" value="1"/>
</dbReference>
<dbReference type="SUPFAM" id="SSF56821">
    <property type="entry name" value="Prismane protein-like"/>
    <property type="match status" value="1"/>
</dbReference>
<gene>
    <name evidence="1" type="primary">hcp</name>
    <name type="ordered locus">APL_1546</name>
</gene>
<organism>
    <name type="scientific">Actinobacillus pleuropneumoniae serotype 5b (strain L20)</name>
    <dbReference type="NCBI Taxonomy" id="416269"/>
    <lineage>
        <taxon>Bacteria</taxon>
        <taxon>Pseudomonadati</taxon>
        <taxon>Pseudomonadota</taxon>
        <taxon>Gammaproteobacteria</taxon>
        <taxon>Pasteurellales</taxon>
        <taxon>Pasteurellaceae</taxon>
        <taxon>Actinobacillus</taxon>
    </lineage>
</organism>
<sequence length="551" mass="60619">MYCVQCEQTMVTPMGNGCSFGQGMCGKTAETSDLQDLLIACLHSLSAWALKAREHGIINHDADNFAPRAFFATLTNVNFDSNRIVGYAQQAIIYRNELIKAISEVEPNPELNHPLAHIELKGISIDQLAEQAKEFALDTDRAEIGEEVHGVRLLALYGLKGAAAYLEHAYVLGKFDNDLYVEYHGFMAWLGTKPSDLNELLEKSLAIGSMNFKVMAMLDAGETETFGNPVPATVNIRPVKGKCILISGHDLKDLKELLEQTEGKGINVYTHGEMLPAHGYPELKKYKHLVGNYGSGWQNQQKEFARFPGAIVMTSNCLIDPNVGDYADRIFTCNIVGWPGVVHLEKHNFAPVIEKALECDGFPYTELEHYITVGFGRKTLIDASDAVIDLVKAGKLSHVFVIGGCDGDKEERHYYTDLAYALPKDTAVLTLGCGKYRFNKLDFGTIDGGLPRLLDAGQCNDTYSAIMLAVTLSQKLGIGLNELPLSIVLSWFEQKAIIVLLTLLALGVKNVYSGPSKPAFLNDNVMNLLHEKFGLSGLTTPEQDFGHIINK</sequence>